<geneLocation type="chloroplast"/>
<protein>
    <recommendedName>
        <fullName evidence="1">Photosystem II reaction center protein J</fullName>
        <shortName evidence="1">PSII-J</shortName>
    </recommendedName>
</protein>
<gene>
    <name evidence="1" type="primary">psbJ</name>
</gene>
<feature type="chain" id="PRO_0000292248" description="Photosystem II reaction center protein J">
    <location>
        <begin position="1"/>
        <end position="40"/>
    </location>
</feature>
<feature type="transmembrane region" description="Helical" evidence="1">
    <location>
        <begin position="8"/>
        <end position="28"/>
    </location>
</feature>
<reference key="1">
    <citation type="submission" date="2007-03" db="EMBL/GenBank/DDBJ databases">
        <title>Sequencing analysis of Barbarea verna chloroplast DNA.</title>
        <authorList>
            <person name="Hosouchi T."/>
            <person name="Tsuruoka H."/>
            <person name="Kotani H."/>
        </authorList>
    </citation>
    <scope>NUCLEOTIDE SEQUENCE [LARGE SCALE GENOMIC DNA]</scope>
</reference>
<comment type="function">
    <text evidence="1">One of the components of the core complex of photosystem II (PSII). PSII is a light-driven water:plastoquinone oxidoreductase that uses light energy to abstract electrons from H(2)O, generating O(2) and a proton gradient subsequently used for ATP formation. It consists of a core antenna complex that captures photons, and an electron transfer chain that converts photonic excitation into a charge separation.</text>
</comment>
<comment type="subunit">
    <text evidence="1">PSII is composed of 1 copy each of membrane proteins PsbA, PsbB, PsbC, PsbD, PsbE, PsbF, PsbH, PsbI, PsbJ, PsbK, PsbL, PsbM, PsbT, PsbX, PsbY, PsbZ, Psb30/Ycf12, at least 3 peripheral proteins of the oxygen-evolving complex and a large number of cofactors. It forms dimeric complexes.</text>
</comment>
<comment type="subcellular location">
    <subcellularLocation>
        <location evidence="1">Plastid</location>
        <location evidence="1">Chloroplast thylakoid membrane</location>
        <topology evidence="1">Single-pass membrane protein</topology>
    </subcellularLocation>
</comment>
<comment type="similarity">
    <text evidence="1">Belongs to the PsbJ family.</text>
</comment>
<organism>
    <name type="scientific">Barbarea verna</name>
    <name type="common">Land cress</name>
    <name type="synonym">Erysimum vernum</name>
    <dbReference type="NCBI Taxonomy" id="50458"/>
    <lineage>
        <taxon>Eukaryota</taxon>
        <taxon>Viridiplantae</taxon>
        <taxon>Streptophyta</taxon>
        <taxon>Embryophyta</taxon>
        <taxon>Tracheophyta</taxon>
        <taxon>Spermatophyta</taxon>
        <taxon>Magnoliopsida</taxon>
        <taxon>eudicotyledons</taxon>
        <taxon>Gunneridae</taxon>
        <taxon>Pentapetalae</taxon>
        <taxon>rosids</taxon>
        <taxon>malvids</taxon>
        <taxon>Brassicales</taxon>
        <taxon>Brassicaceae</taxon>
        <taxon>Cardamineae</taxon>
        <taxon>Barbarea</taxon>
    </lineage>
</organism>
<sequence>MADTTGRIPLWVIGTVAGILVIGLIGIFFYGSYSGLGSSL</sequence>
<evidence type="ECO:0000255" key="1">
    <source>
        <dbReference type="HAMAP-Rule" id="MF_01305"/>
    </source>
</evidence>
<dbReference type="EMBL" id="AP009370">
    <property type="protein sequence ID" value="BAF50124.1"/>
    <property type="molecule type" value="Genomic_DNA"/>
</dbReference>
<dbReference type="RefSeq" id="YP_001123300.1">
    <property type="nucleotide sequence ID" value="NC_009269.1"/>
</dbReference>
<dbReference type="SMR" id="A4QKB9"/>
<dbReference type="GeneID" id="4961891"/>
<dbReference type="GO" id="GO:0009535">
    <property type="term" value="C:chloroplast thylakoid membrane"/>
    <property type="evidence" value="ECO:0007669"/>
    <property type="project" value="UniProtKB-SubCell"/>
</dbReference>
<dbReference type="GO" id="GO:0009539">
    <property type="term" value="C:photosystem II reaction center"/>
    <property type="evidence" value="ECO:0007669"/>
    <property type="project" value="InterPro"/>
</dbReference>
<dbReference type="GO" id="GO:0015979">
    <property type="term" value="P:photosynthesis"/>
    <property type="evidence" value="ECO:0007669"/>
    <property type="project" value="UniProtKB-UniRule"/>
</dbReference>
<dbReference type="Gene3D" id="6.10.250.2070">
    <property type="match status" value="1"/>
</dbReference>
<dbReference type="HAMAP" id="MF_01305">
    <property type="entry name" value="PSII_PsbJ"/>
    <property type="match status" value="1"/>
</dbReference>
<dbReference type="InterPro" id="IPR002682">
    <property type="entry name" value="PSII_PsbJ"/>
</dbReference>
<dbReference type="InterPro" id="IPR037267">
    <property type="entry name" value="PSII_PsbJ_sf"/>
</dbReference>
<dbReference type="NCBIfam" id="NF002722">
    <property type="entry name" value="PRK02565.1"/>
    <property type="match status" value="1"/>
</dbReference>
<dbReference type="PANTHER" id="PTHR34812">
    <property type="entry name" value="PHOTOSYSTEM II REACTION CENTER PROTEIN J"/>
    <property type="match status" value="1"/>
</dbReference>
<dbReference type="PANTHER" id="PTHR34812:SF3">
    <property type="entry name" value="PHOTOSYSTEM II REACTION CENTER PROTEIN J"/>
    <property type="match status" value="1"/>
</dbReference>
<dbReference type="Pfam" id="PF01788">
    <property type="entry name" value="PsbJ"/>
    <property type="match status" value="1"/>
</dbReference>
<dbReference type="SUPFAM" id="SSF161021">
    <property type="entry name" value="Photosystem II reaction center protein J, PsbJ"/>
    <property type="match status" value="1"/>
</dbReference>
<accession>A4QKB9</accession>
<proteinExistence type="inferred from homology"/>
<name>PSBJ_BARVE</name>
<keyword id="KW-0150">Chloroplast</keyword>
<keyword id="KW-0472">Membrane</keyword>
<keyword id="KW-0602">Photosynthesis</keyword>
<keyword id="KW-0604">Photosystem II</keyword>
<keyword id="KW-0934">Plastid</keyword>
<keyword id="KW-0674">Reaction center</keyword>
<keyword id="KW-0793">Thylakoid</keyword>
<keyword id="KW-0812">Transmembrane</keyword>
<keyword id="KW-1133">Transmembrane helix</keyword>